<reference key="1">
    <citation type="journal article" date="1987" name="J. Gen. Virol.">
        <title>The nucleotide sequence and genome organization of bovine papillomavirus type 4.</title>
        <authorList>
            <person name="Patel K.R."/>
            <person name="Smith K.T."/>
            <person name="Campo M.S."/>
        </authorList>
    </citation>
    <scope>NUCLEOTIDE SEQUENCE [GENOMIC DNA]</scope>
</reference>
<protein>
    <recommendedName>
        <fullName>Probable protein L3</fullName>
    </recommendedName>
</protein>
<dbReference type="EMBL" id="X05817">
    <property type="status" value="NOT_ANNOTATED_CDS"/>
    <property type="molecule type" value="Genomic_DNA"/>
</dbReference>
<dbReference type="PIR" id="C26214">
    <property type="entry name" value="P3WLB4"/>
</dbReference>
<dbReference type="SMR" id="P08343"/>
<dbReference type="Proteomes" id="UP000007613">
    <property type="component" value="Segment"/>
</dbReference>
<keyword id="KW-0426">Late protein</keyword>
<feature type="chain" id="PRO_0000133641" description="Probable protein L3">
    <location>
        <begin position="1"/>
        <end position="113"/>
    </location>
</feature>
<organismHost>
    <name type="scientific">Bos taurus</name>
    <name type="common">Bovine</name>
    <dbReference type="NCBI Taxonomy" id="9913"/>
</organismHost>
<organism>
    <name type="scientific">Bos taurus papillomavirus 4</name>
    <name type="common">Bovine papillomavirus 4</name>
    <dbReference type="NCBI Taxonomy" id="10562"/>
    <lineage>
        <taxon>Viruses</taxon>
        <taxon>Monodnaviria</taxon>
        <taxon>Shotokuvirae</taxon>
        <taxon>Cossaviricota</taxon>
        <taxon>Papovaviricetes</taxon>
        <taxon>Zurhausenvirales</taxon>
        <taxon>Papillomaviridae</taxon>
        <taxon>Firstpapillomavirinae</taxon>
        <taxon>Xipapillomavirus</taxon>
        <taxon>Xipapillomavirus 1</taxon>
    </lineage>
</organism>
<sequence length="113" mass="12840">MIFLQESLVAHISYQPLDEDPCPPQYILEAPVDLWYPVISRFIIGPFGYKGHKAVIMACAGTMSFLLQLLIVLEALTLVYQYTLLTQRLNHKKLIQPLSLSTTSDMWKNGICL</sequence>
<accession>P08343</accession>
<proteinExistence type="predicted"/>
<name>VL3_BPV4</name>